<feature type="chain" id="PRO_0000384475" description="Ras guanine nucleotide exchange factor Q">
    <location>
        <begin position="1"/>
        <end position="1298"/>
    </location>
</feature>
<feature type="domain" description="N-terminal Ras-GEF" evidence="4">
    <location>
        <begin position="550"/>
        <end position="689"/>
    </location>
</feature>
<feature type="domain" description="DEP" evidence="3">
    <location>
        <begin position="723"/>
        <end position="801"/>
    </location>
</feature>
<feature type="domain" description="Ras-GEF" evidence="5">
    <location>
        <begin position="964"/>
        <end position="1193"/>
    </location>
</feature>
<feature type="region of interest" description="Disordered" evidence="6">
    <location>
        <begin position="1"/>
        <end position="26"/>
    </location>
</feature>
<feature type="region of interest" description="Disordered" evidence="6">
    <location>
        <begin position="46"/>
        <end position="88"/>
    </location>
</feature>
<feature type="region of interest" description="Disordered" evidence="6">
    <location>
        <begin position="211"/>
        <end position="271"/>
    </location>
</feature>
<feature type="region of interest" description="Disordered" evidence="6">
    <location>
        <begin position="314"/>
        <end position="384"/>
    </location>
</feature>
<feature type="region of interest" description="Disordered" evidence="6">
    <location>
        <begin position="459"/>
        <end position="533"/>
    </location>
</feature>
<feature type="region of interest" description="Disordered" evidence="6">
    <location>
        <begin position="781"/>
        <end position="864"/>
    </location>
</feature>
<feature type="region of interest" description="Disordered" evidence="6">
    <location>
        <begin position="884"/>
        <end position="920"/>
    </location>
</feature>
<feature type="region of interest" description="Disordered" evidence="6">
    <location>
        <begin position="1214"/>
        <end position="1267"/>
    </location>
</feature>
<feature type="coiled-coil region" evidence="2">
    <location>
        <begin position="352"/>
        <end position="389"/>
    </location>
</feature>
<feature type="compositionally biased region" description="Low complexity" evidence="6">
    <location>
        <begin position="211"/>
        <end position="245"/>
    </location>
</feature>
<feature type="compositionally biased region" description="Low complexity" evidence="6">
    <location>
        <begin position="315"/>
        <end position="384"/>
    </location>
</feature>
<feature type="compositionally biased region" description="Polar residues" evidence="6">
    <location>
        <begin position="473"/>
        <end position="482"/>
    </location>
</feature>
<feature type="compositionally biased region" description="Low complexity" evidence="6">
    <location>
        <begin position="483"/>
        <end position="501"/>
    </location>
</feature>
<feature type="compositionally biased region" description="Low complexity" evidence="6">
    <location>
        <begin position="508"/>
        <end position="533"/>
    </location>
</feature>
<feature type="compositionally biased region" description="Low complexity" evidence="6">
    <location>
        <begin position="783"/>
        <end position="864"/>
    </location>
</feature>
<reference key="1">
    <citation type="journal article" date="2005" name="Genome Biol.">
        <title>The Dictyostelium genome encodes numerous RasGEFs with multiple biological roles.</title>
        <authorList>
            <person name="Wilkins A."/>
            <person name="Szafranski K."/>
            <person name="Fraser D.J."/>
            <person name="Bakthavatsalam D."/>
            <person name="Mueller R."/>
            <person name="Fisher P.R."/>
            <person name="Gloeckner G."/>
            <person name="Eichinger L."/>
            <person name="Noegel A.A."/>
            <person name="Insall R.H."/>
        </authorList>
    </citation>
    <scope>NUCLEOTIDE SEQUENCE [GENOMIC DNA]</scope>
    <scope>DEVELOPMENTAL STAGE</scope>
    <source>
        <strain>AX4</strain>
    </source>
</reference>
<reference key="2">
    <citation type="journal article" date="2005" name="Nature">
        <title>The genome of the social amoeba Dictyostelium discoideum.</title>
        <authorList>
            <person name="Eichinger L."/>
            <person name="Pachebat J.A."/>
            <person name="Gloeckner G."/>
            <person name="Rajandream M.A."/>
            <person name="Sucgang R."/>
            <person name="Berriman M."/>
            <person name="Song J."/>
            <person name="Olsen R."/>
            <person name="Szafranski K."/>
            <person name="Xu Q."/>
            <person name="Tunggal B."/>
            <person name="Kummerfeld S."/>
            <person name="Madera M."/>
            <person name="Konfortov B.A."/>
            <person name="Rivero F."/>
            <person name="Bankier A.T."/>
            <person name="Lehmann R."/>
            <person name="Hamlin N."/>
            <person name="Davies R."/>
            <person name="Gaudet P."/>
            <person name="Fey P."/>
            <person name="Pilcher K."/>
            <person name="Chen G."/>
            <person name="Saunders D."/>
            <person name="Sodergren E.J."/>
            <person name="Davis P."/>
            <person name="Kerhornou A."/>
            <person name="Nie X."/>
            <person name="Hall N."/>
            <person name="Anjard C."/>
            <person name="Hemphill L."/>
            <person name="Bason N."/>
            <person name="Farbrother P."/>
            <person name="Desany B."/>
            <person name="Just E."/>
            <person name="Morio T."/>
            <person name="Rost R."/>
            <person name="Churcher C.M."/>
            <person name="Cooper J."/>
            <person name="Haydock S."/>
            <person name="van Driessche N."/>
            <person name="Cronin A."/>
            <person name="Goodhead I."/>
            <person name="Muzny D.M."/>
            <person name="Mourier T."/>
            <person name="Pain A."/>
            <person name="Lu M."/>
            <person name="Harper D."/>
            <person name="Lindsay R."/>
            <person name="Hauser H."/>
            <person name="James K.D."/>
            <person name="Quiles M."/>
            <person name="Madan Babu M."/>
            <person name="Saito T."/>
            <person name="Buchrieser C."/>
            <person name="Wardroper A."/>
            <person name="Felder M."/>
            <person name="Thangavelu M."/>
            <person name="Johnson D."/>
            <person name="Knights A."/>
            <person name="Loulseged H."/>
            <person name="Mungall K.L."/>
            <person name="Oliver K."/>
            <person name="Price C."/>
            <person name="Quail M.A."/>
            <person name="Urushihara H."/>
            <person name="Hernandez J."/>
            <person name="Rabbinowitsch E."/>
            <person name="Steffen D."/>
            <person name="Sanders M."/>
            <person name="Ma J."/>
            <person name="Kohara Y."/>
            <person name="Sharp S."/>
            <person name="Simmonds M.N."/>
            <person name="Spiegler S."/>
            <person name="Tivey A."/>
            <person name="Sugano S."/>
            <person name="White B."/>
            <person name="Walker D."/>
            <person name="Woodward J.R."/>
            <person name="Winckler T."/>
            <person name="Tanaka Y."/>
            <person name="Shaulsky G."/>
            <person name="Schleicher M."/>
            <person name="Weinstock G.M."/>
            <person name="Rosenthal A."/>
            <person name="Cox E.C."/>
            <person name="Chisholm R.L."/>
            <person name="Gibbs R.A."/>
            <person name="Loomis W.F."/>
            <person name="Platzer M."/>
            <person name="Kay R.R."/>
            <person name="Williams J.G."/>
            <person name="Dear P.H."/>
            <person name="Noegel A.A."/>
            <person name="Barrell B.G."/>
            <person name="Kuspa A."/>
        </authorList>
    </citation>
    <scope>NUCLEOTIDE SEQUENCE [LARGE SCALE GENOMIC DNA]</scope>
    <source>
        <strain>AX4</strain>
    </source>
</reference>
<reference key="3">
    <citation type="journal article" date="2005" name="Bioinformatics">
        <title>Microarray phenotyping in Dictyostelium reveals a regulon of chemotaxis genes.</title>
        <authorList>
            <person name="Booth E.O."/>
            <person name="Van Driessche N."/>
            <person name="Zhuchenko O."/>
            <person name="Kuspa A."/>
            <person name="Shaulsky G."/>
        </authorList>
    </citation>
    <scope>FUNCTION</scope>
</reference>
<protein>
    <recommendedName>
        <fullName>Ras guanine nucleotide exchange factor Q</fullName>
    </recommendedName>
    <alternativeName>
        <fullName>RasGEF domain-containing protein Q</fullName>
    </alternativeName>
</protein>
<proteinExistence type="evidence at transcript level"/>
<evidence type="ECO:0000250" key="1"/>
<evidence type="ECO:0000255" key="2"/>
<evidence type="ECO:0000255" key="3">
    <source>
        <dbReference type="PROSITE-ProRule" id="PRU00066"/>
    </source>
</evidence>
<evidence type="ECO:0000255" key="4">
    <source>
        <dbReference type="PROSITE-ProRule" id="PRU00135"/>
    </source>
</evidence>
<evidence type="ECO:0000255" key="5">
    <source>
        <dbReference type="PROSITE-ProRule" id="PRU00168"/>
    </source>
</evidence>
<evidence type="ECO:0000256" key="6">
    <source>
        <dbReference type="SAM" id="MobiDB-lite"/>
    </source>
</evidence>
<evidence type="ECO:0000269" key="7">
    <source>
    </source>
</evidence>
<evidence type="ECO:0000269" key="8">
    <source>
    </source>
</evidence>
<name>GEFQ_DICDI</name>
<gene>
    <name type="primary">gefQ</name>
    <name type="synonym">rasGEFQ</name>
    <name type="ORF">DDB_G0289665</name>
</gene>
<accession>Q86G47</accession>
<accession>Q54H67</accession>
<sequence length="1298" mass="143833">MDINNNIDNITNSNNNIEKNNNINNFDNNNNNNNILYISSSESNNNNNINSSNSSSNNTNNSNNSSISNNNNNNNNNNNNNNNISIEGNTANNSDIKVGTSLTNSIKSFKKLFNNQKSNNNNNNLQVNHFQQSQSLPPSSNTSPTFSSTSPIIIVSDNTNIESLDLEINSNNSGSIGSNNSGDNNNINMNYKSKSLSLNYSILRPLCDTDNISNNNNNNNNNSNNSNNNNNMSSSDNNNNSNSNNTTNGGQLKRNNSSNNNNRYSIGGPLKMSNSSDFNDYLLNNNILYNINQPNRKTPPPNLMSVLKNSFTQYTPPSTTLTSPTSTRNPNRLSTNLSNVTNISSSTSSSSSSLNANNNTNNNNQQLQQQQQQQQQQQLQQQQQLTKSYSVSNLMRSQSSSSSSQSPLIQQSDQVTFDYDYIYRRFLRSRSELTLPSWDNAQYEGDFDTEIQDTLTRALSNGNLPSDNKRQSLHLSTESTTSNNNNNNNNNNNNNNNNNNNKSKTDDTTNSATTTTTTTTTTTTTTTTNSTTTTTQLNNGKNLIGLVYNDKDEVIAGERDKIIGLFTDISKVTGTQFLEEFLFTYHYYMTSVDLLENLKGRFNNPLMDQAAQSISILEENHDKVKIEQLSTHIRLRVINVIKKWIENHGYAFATDINLYQMLVDFIDGDVMSFSQRWGQYLKKAINDSGCLLRYIAVNVKEASSKQLREIISLDNLDAISKLMSQSLQLKERKKGLKVIKNSFTGNEAVEWLINKFNLDSKDEALETLSKMLQSNLIFHHSKSGSSFSPSSSSSSTTTTTTTSSSSSSSNTTTANMASSSSATDNSSSGGVVTSSSSSSSSSSSSPSNGNGTTAITSTSLPNSISSSNSTSILTSLVVNSNSSGIANGSSTPSIPSSVTSPLTNSKSTLNSTPSSSSNSFTFKDKSTSIYYFIFENINFPEPIVPKTFFSSPNSTFSITFLDIHPVEIARQLTLIDYELFKKLSPTDFYHTAWSKPDAKEKVPNLINFINRSNTVSYWVATEILSSSNIKHRVSVLKRFITIAEILRKFHNWNTLTGILMGLNLGSIQRLKKTWESIDKKQLDSLQNLINLTSERLNYSNYRKEMSTPTYPCLPFMAVYLKDLYFIEENPDYLENGYINFEKMKMISKVLIEIKRYQTEQYWLKKIDAIENILKSVVLTDKDLYKASHMIEQPQRTMTVGSNLKAQSFLTTTTTTTTTNNLNNNNNNNNPNNNNNNNNNSANNKSSPSPSPSSSPITSSPISSLTINNNNTISSNLSASTDSSINTKKKSSFLMFGKK</sequence>
<keyword id="KW-0175">Coiled coil</keyword>
<keyword id="KW-0344">Guanine-nucleotide releasing factor</keyword>
<keyword id="KW-1185">Reference proteome</keyword>
<organism>
    <name type="scientific">Dictyostelium discoideum</name>
    <name type="common">Social amoeba</name>
    <dbReference type="NCBI Taxonomy" id="44689"/>
    <lineage>
        <taxon>Eukaryota</taxon>
        <taxon>Amoebozoa</taxon>
        <taxon>Evosea</taxon>
        <taxon>Eumycetozoa</taxon>
        <taxon>Dictyostelia</taxon>
        <taxon>Dictyosteliales</taxon>
        <taxon>Dictyosteliaceae</taxon>
        <taxon>Dictyostelium</taxon>
    </lineage>
</organism>
<comment type="function">
    <text evidence="1 8">Promotes the exchange of Ras-bound GDP by GTP (By similarity). Seems to play a role in chemotaxis.</text>
</comment>
<comment type="developmental stage">
    <text evidence="7">Expressed during development; with a peak between 8-12 hours of development.</text>
</comment>
<dbReference type="EMBL" id="AY254473">
    <property type="protein sequence ID" value="AAP13089.1"/>
    <property type="molecule type" value="Genomic_DNA"/>
</dbReference>
<dbReference type="EMBL" id="AAFI02000148">
    <property type="protein sequence ID" value="EAL62544.1"/>
    <property type="molecule type" value="Genomic_DNA"/>
</dbReference>
<dbReference type="RefSeq" id="XP_636051.1">
    <property type="nucleotide sequence ID" value="XM_630959.1"/>
</dbReference>
<dbReference type="SMR" id="Q86G47"/>
<dbReference type="FunCoup" id="Q86G47">
    <property type="interactions" value="616"/>
</dbReference>
<dbReference type="STRING" id="44689.Q86G47"/>
<dbReference type="GlyGen" id="Q86G47">
    <property type="glycosylation" value="1 site"/>
</dbReference>
<dbReference type="PaxDb" id="44689-DDB0191356"/>
<dbReference type="EnsemblProtists" id="EAL62544">
    <property type="protein sequence ID" value="EAL62544"/>
    <property type="gene ID" value="DDB_G0289665"/>
</dbReference>
<dbReference type="GeneID" id="8627260"/>
<dbReference type="KEGG" id="ddi:DDB_G0289665"/>
<dbReference type="dictyBase" id="DDB_G0289665">
    <property type="gene designation" value="gefQ"/>
</dbReference>
<dbReference type="VEuPathDB" id="AmoebaDB:DDB_G0289665"/>
<dbReference type="eggNOG" id="KOG3417">
    <property type="taxonomic scope" value="Eukaryota"/>
</dbReference>
<dbReference type="HOGENOM" id="CLU_261712_0_0_1"/>
<dbReference type="InParanoid" id="Q86G47"/>
<dbReference type="OMA" id="FLYTYHY"/>
<dbReference type="Reactome" id="R-DDI-193648">
    <property type="pathway name" value="NRAGE signals death through JNK"/>
</dbReference>
<dbReference type="Reactome" id="R-DDI-9013148">
    <property type="pathway name" value="CDC42 GTPase cycle"/>
</dbReference>
<dbReference type="Reactome" id="R-DDI-9013149">
    <property type="pathway name" value="RAC1 GTPase cycle"/>
</dbReference>
<dbReference type="PRO" id="PR:Q86G47"/>
<dbReference type="Proteomes" id="UP000002195">
    <property type="component" value="Chromosome 5"/>
</dbReference>
<dbReference type="GO" id="GO:0005938">
    <property type="term" value="C:cell cortex"/>
    <property type="evidence" value="ECO:0000314"/>
    <property type="project" value="dictyBase"/>
</dbReference>
<dbReference type="GO" id="GO:0005829">
    <property type="term" value="C:cytosol"/>
    <property type="evidence" value="ECO:0000314"/>
    <property type="project" value="dictyBase"/>
</dbReference>
<dbReference type="GO" id="GO:0005634">
    <property type="term" value="C:nucleus"/>
    <property type="evidence" value="ECO:0000314"/>
    <property type="project" value="dictyBase"/>
</dbReference>
<dbReference type="GO" id="GO:0005886">
    <property type="term" value="C:plasma membrane"/>
    <property type="evidence" value="ECO:0000318"/>
    <property type="project" value="GO_Central"/>
</dbReference>
<dbReference type="GO" id="GO:0051015">
    <property type="term" value="F:actin filament binding"/>
    <property type="evidence" value="ECO:0000314"/>
    <property type="project" value="dictyBase"/>
</dbReference>
<dbReference type="GO" id="GO:0005085">
    <property type="term" value="F:guanyl-nucleotide exchange factor activity"/>
    <property type="evidence" value="ECO:0000314"/>
    <property type="project" value="dictyBase"/>
</dbReference>
<dbReference type="GO" id="GO:0045159">
    <property type="term" value="F:myosin II binding"/>
    <property type="evidence" value="ECO:0000353"/>
    <property type="project" value="dictyBase"/>
</dbReference>
<dbReference type="GO" id="GO:0032486">
    <property type="term" value="P:Rap protein signal transduction"/>
    <property type="evidence" value="ECO:0000315"/>
    <property type="project" value="dictyBase"/>
</dbReference>
<dbReference type="GO" id="GO:0007265">
    <property type="term" value="P:Ras protein signal transduction"/>
    <property type="evidence" value="ECO:0000314"/>
    <property type="project" value="dictyBase"/>
</dbReference>
<dbReference type="GO" id="GO:0043520">
    <property type="term" value="P:regulation of myosin II filament assembly"/>
    <property type="evidence" value="ECO:0000314"/>
    <property type="project" value="dictyBase"/>
</dbReference>
<dbReference type="GO" id="GO:0046686">
    <property type="term" value="P:response to cadmium ion"/>
    <property type="evidence" value="ECO:0007007"/>
    <property type="project" value="dictyBase"/>
</dbReference>
<dbReference type="GO" id="GO:0030587">
    <property type="term" value="P:sorocarp development"/>
    <property type="evidence" value="ECO:0000315"/>
    <property type="project" value="dictyBase"/>
</dbReference>
<dbReference type="CDD" id="cd04371">
    <property type="entry name" value="DEP"/>
    <property type="match status" value="1"/>
</dbReference>
<dbReference type="CDD" id="cd00155">
    <property type="entry name" value="RasGEF"/>
    <property type="match status" value="1"/>
</dbReference>
<dbReference type="CDD" id="cd06224">
    <property type="entry name" value="REM"/>
    <property type="match status" value="1"/>
</dbReference>
<dbReference type="Gene3D" id="1.10.840.10">
    <property type="entry name" value="Ras guanine-nucleotide exchange factors catalytic domain"/>
    <property type="match status" value="1"/>
</dbReference>
<dbReference type="Gene3D" id="1.20.870.10">
    <property type="entry name" value="Son of sevenless (SoS) protein Chain: S domain 1"/>
    <property type="match status" value="1"/>
</dbReference>
<dbReference type="Gene3D" id="1.10.10.10">
    <property type="entry name" value="Winged helix-like DNA-binding domain superfamily/Winged helix DNA-binding domain"/>
    <property type="match status" value="1"/>
</dbReference>
<dbReference type="InterPro" id="IPR000591">
    <property type="entry name" value="DEP_dom"/>
</dbReference>
<dbReference type="InterPro" id="IPR008937">
    <property type="entry name" value="Ras-like_GEF"/>
</dbReference>
<dbReference type="InterPro" id="IPR000651">
    <property type="entry name" value="Ras-like_Gua-exchang_fac_N"/>
</dbReference>
<dbReference type="InterPro" id="IPR023578">
    <property type="entry name" value="Ras_GEF_dom_sf"/>
</dbReference>
<dbReference type="InterPro" id="IPR001895">
    <property type="entry name" value="RASGEF_cat_dom"/>
</dbReference>
<dbReference type="InterPro" id="IPR036964">
    <property type="entry name" value="RASGEF_cat_dom_sf"/>
</dbReference>
<dbReference type="InterPro" id="IPR036388">
    <property type="entry name" value="WH-like_DNA-bd_sf"/>
</dbReference>
<dbReference type="InterPro" id="IPR036390">
    <property type="entry name" value="WH_DNA-bd_sf"/>
</dbReference>
<dbReference type="PANTHER" id="PTHR23113">
    <property type="entry name" value="GUANINE NUCLEOTIDE EXCHANGE FACTOR"/>
    <property type="match status" value="1"/>
</dbReference>
<dbReference type="PANTHER" id="PTHR23113:SF204">
    <property type="entry name" value="RAS GUANINE NUCLEOTIDE EXCHANGE FACTOR Q"/>
    <property type="match status" value="1"/>
</dbReference>
<dbReference type="Pfam" id="PF00610">
    <property type="entry name" value="DEP"/>
    <property type="match status" value="1"/>
</dbReference>
<dbReference type="Pfam" id="PF00617">
    <property type="entry name" value="RasGEF"/>
    <property type="match status" value="1"/>
</dbReference>
<dbReference type="Pfam" id="PF00618">
    <property type="entry name" value="RasGEF_N"/>
    <property type="match status" value="1"/>
</dbReference>
<dbReference type="SMART" id="SM00049">
    <property type="entry name" value="DEP"/>
    <property type="match status" value="1"/>
</dbReference>
<dbReference type="SMART" id="SM00147">
    <property type="entry name" value="RasGEF"/>
    <property type="match status" value="1"/>
</dbReference>
<dbReference type="SMART" id="SM00229">
    <property type="entry name" value="RasGEFN"/>
    <property type="match status" value="1"/>
</dbReference>
<dbReference type="SUPFAM" id="SSF48366">
    <property type="entry name" value="Ras GEF"/>
    <property type="match status" value="1"/>
</dbReference>
<dbReference type="SUPFAM" id="SSF46785">
    <property type="entry name" value="Winged helix' DNA-binding domain"/>
    <property type="match status" value="1"/>
</dbReference>
<dbReference type="PROSITE" id="PS50186">
    <property type="entry name" value="DEP"/>
    <property type="match status" value="1"/>
</dbReference>
<dbReference type="PROSITE" id="PS50009">
    <property type="entry name" value="RASGEF_CAT"/>
    <property type="match status" value="1"/>
</dbReference>
<dbReference type="PROSITE" id="PS50212">
    <property type="entry name" value="RASGEF_NTER"/>
    <property type="match status" value="1"/>
</dbReference>